<keyword id="KW-0687">Ribonucleoprotein</keyword>
<keyword id="KW-0689">Ribosomal protein</keyword>
<organism>
    <name type="scientific">Staphylococcus aureus (strain MW2)</name>
    <dbReference type="NCBI Taxonomy" id="196620"/>
    <lineage>
        <taxon>Bacteria</taxon>
        <taxon>Bacillati</taxon>
        <taxon>Bacillota</taxon>
        <taxon>Bacilli</taxon>
        <taxon>Bacillales</taxon>
        <taxon>Staphylococcaceae</taxon>
        <taxon>Staphylococcus</taxon>
    </lineage>
</organism>
<accession>P66522</accession>
<accession>Q99TS1</accession>
<sequence>MSKTVVRKNESLEDALRRFKRSVSKSGTIQEVRKREFYEKPSVKRKKKSEAARKRKFK</sequence>
<name>RS21_STAAW</name>
<feature type="chain" id="PRO_0000178378" description="Small ribosomal subunit protein bS21">
    <location>
        <begin position="1"/>
        <end position="58"/>
    </location>
</feature>
<dbReference type="EMBL" id="BA000033">
    <property type="protein sequence ID" value="BAB95392.1"/>
    <property type="molecule type" value="Genomic_DNA"/>
</dbReference>
<dbReference type="RefSeq" id="WP_000048060.1">
    <property type="nucleotide sequence ID" value="NC_003923.1"/>
</dbReference>
<dbReference type="SMR" id="P66522"/>
<dbReference type="GeneID" id="98345946"/>
<dbReference type="KEGG" id="sam:MW1527"/>
<dbReference type="HOGENOM" id="CLU_159258_3_2_9"/>
<dbReference type="GO" id="GO:1990904">
    <property type="term" value="C:ribonucleoprotein complex"/>
    <property type="evidence" value="ECO:0007669"/>
    <property type="project" value="UniProtKB-KW"/>
</dbReference>
<dbReference type="GO" id="GO:0005840">
    <property type="term" value="C:ribosome"/>
    <property type="evidence" value="ECO:0007669"/>
    <property type="project" value="UniProtKB-KW"/>
</dbReference>
<dbReference type="GO" id="GO:0003735">
    <property type="term" value="F:structural constituent of ribosome"/>
    <property type="evidence" value="ECO:0007669"/>
    <property type="project" value="InterPro"/>
</dbReference>
<dbReference type="GO" id="GO:0006412">
    <property type="term" value="P:translation"/>
    <property type="evidence" value="ECO:0007669"/>
    <property type="project" value="UniProtKB-UniRule"/>
</dbReference>
<dbReference type="Gene3D" id="1.20.5.1150">
    <property type="entry name" value="Ribosomal protein S8"/>
    <property type="match status" value="1"/>
</dbReference>
<dbReference type="HAMAP" id="MF_00358">
    <property type="entry name" value="Ribosomal_bS21"/>
    <property type="match status" value="1"/>
</dbReference>
<dbReference type="InterPro" id="IPR001911">
    <property type="entry name" value="Ribosomal_bS21"/>
</dbReference>
<dbReference type="InterPro" id="IPR018278">
    <property type="entry name" value="Ribosomal_bS21_CS"/>
</dbReference>
<dbReference type="InterPro" id="IPR038380">
    <property type="entry name" value="Ribosomal_bS21_sf"/>
</dbReference>
<dbReference type="NCBIfam" id="TIGR00030">
    <property type="entry name" value="S21p"/>
    <property type="match status" value="1"/>
</dbReference>
<dbReference type="PANTHER" id="PTHR21109">
    <property type="entry name" value="MITOCHONDRIAL 28S RIBOSOMAL PROTEIN S21"/>
    <property type="match status" value="1"/>
</dbReference>
<dbReference type="PANTHER" id="PTHR21109:SF22">
    <property type="entry name" value="SMALL RIBOSOMAL SUBUNIT PROTEIN BS21"/>
    <property type="match status" value="1"/>
</dbReference>
<dbReference type="Pfam" id="PF01165">
    <property type="entry name" value="Ribosomal_S21"/>
    <property type="match status" value="1"/>
</dbReference>
<dbReference type="PRINTS" id="PR00976">
    <property type="entry name" value="RIBOSOMALS21"/>
</dbReference>
<dbReference type="PROSITE" id="PS01181">
    <property type="entry name" value="RIBOSOMAL_S21"/>
    <property type="match status" value="1"/>
</dbReference>
<protein>
    <recommendedName>
        <fullName evidence="1">Small ribosomal subunit protein bS21</fullName>
    </recommendedName>
    <alternativeName>
        <fullName evidence="2">30S ribosomal protein S21</fullName>
    </alternativeName>
</protein>
<proteinExistence type="inferred from homology"/>
<reference key="1">
    <citation type="journal article" date="2002" name="Lancet">
        <title>Genome and virulence determinants of high virulence community-acquired MRSA.</title>
        <authorList>
            <person name="Baba T."/>
            <person name="Takeuchi F."/>
            <person name="Kuroda M."/>
            <person name="Yuzawa H."/>
            <person name="Aoki K."/>
            <person name="Oguchi A."/>
            <person name="Nagai Y."/>
            <person name="Iwama N."/>
            <person name="Asano K."/>
            <person name="Naimi T."/>
            <person name="Kuroda H."/>
            <person name="Cui L."/>
            <person name="Yamamoto K."/>
            <person name="Hiramatsu K."/>
        </authorList>
    </citation>
    <scope>NUCLEOTIDE SEQUENCE [LARGE SCALE GENOMIC DNA]</scope>
    <source>
        <strain>MW2</strain>
    </source>
</reference>
<evidence type="ECO:0000255" key="1">
    <source>
        <dbReference type="HAMAP-Rule" id="MF_00358"/>
    </source>
</evidence>
<evidence type="ECO:0000305" key="2"/>
<gene>
    <name evidence="1" type="primary">rpsU</name>
    <name type="ordered locus">MW1527</name>
</gene>
<comment type="similarity">
    <text evidence="1">Belongs to the bacterial ribosomal protein bS21 family.</text>
</comment>